<name>KAPR_ASPFU</name>
<evidence type="ECO:0000250" key="1"/>
<evidence type="ECO:0000255" key="2"/>
<evidence type="ECO:0000256" key="3">
    <source>
        <dbReference type="SAM" id="MobiDB-lite"/>
    </source>
</evidence>
<evidence type="ECO:0000305" key="4"/>
<protein>
    <recommendedName>
        <fullName>cAMP-dependent protein kinase regulatory subunit</fullName>
        <shortName>PKA regulatory subunit</shortName>
    </recommendedName>
</protein>
<gene>
    <name type="primary">pkaR</name>
    <name type="ORF">AFUA_3G10000</name>
</gene>
<reference key="1">
    <citation type="journal article" date="2002" name="Mycopathologia">
        <title>Cloning and expression of pkaC and pkaR, the genes encoding the cAMP-dependent protein kinase of Aspergillus fumigatus.</title>
        <authorList>
            <person name="Oliver B.G."/>
            <person name="Panepinto J.C."/>
            <person name="Fortwendel J.R."/>
            <person name="Smith D.L."/>
            <person name="Askew D.S."/>
            <person name="Rhodes J.C."/>
        </authorList>
    </citation>
    <scope>NUCLEOTIDE SEQUENCE [GENOMIC DNA]</scope>
</reference>
<reference key="2">
    <citation type="submission" date="2000-05" db="EMBL/GenBank/DDBJ databases">
        <title>Signal transduction in Aspergillus fumigatus.</title>
        <authorList>
            <person name="Liebmann B."/>
            <person name="Brakhage A.A."/>
        </authorList>
    </citation>
    <scope>NUCLEOTIDE SEQUENCE [GENOMIC DNA]</scope>
    <source>
        <strain>ATCC 46645 / NCPF 2109</strain>
    </source>
</reference>
<reference key="3">
    <citation type="journal article" date="2005" name="Nature">
        <title>Genomic sequence of the pathogenic and allergenic filamentous fungus Aspergillus fumigatus.</title>
        <authorList>
            <person name="Nierman W.C."/>
            <person name="Pain A."/>
            <person name="Anderson M.J."/>
            <person name="Wortman J.R."/>
            <person name="Kim H.S."/>
            <person name="Arroyo J."/>
            <person name="Berriman M."/>
            <person name="Abe K."/>
            <person name="Archer D.B."/>
            <person name="Bermejo C."/>
            <person name="Bennett J.W."/>
            <person name="Bowyer P."/>
            <person name="Chen D."/>
            <person name="Collins M."/>
            <person name="Coulsen R."/>
            <person name="Davies R."/>
            <person name="Dyer P.S."/>
            <person name="Farman M.L."/>
            <person name="Fedorova N."/>
            <person name="Fedorova N.D."/>
            <person name="Feldblyum T.V."/>
            <person name="Fischer R."/>
            <person name="Fosker N."/>
            <person name="Fraser A."/>
            <person name="Garcia J.L."/>
            <person name="Garcia M.J."/>
            <person name="Goble A."/>
            <person name="Goldman G.H."/>
            <person name="Gomi K."/>
            <person name="Griffith-Jones S."/>
            <person name="Gwilliam R."/>
            <person name="Haas B.J."/>
            <person name="Haas H."/>
            <person name="Harris D.E."/>
            <person name="Horiuchi H."/>
            <person name="Huang J."/>
            <person name="Humphray S."/>
            <person name="Jimenez J."/>
            <person name="Keller N."/>
            <person name="Khouri H."/>
            <person name="Kitamoto K."/>
            <person name="Kobayashi T."/>
            <person name="Konzack S."/>
            <person name="Kulkarni R."/>
            <person name="Kumagai T."/>
            <person name="Lafton A."/>
            <person name="Latge J.-P."/>
            <person name="Li W."/>
            <person name="Lord A."/>
            <person name="Lu C."/>
            <person name="Majoros W.H."/>
            <person name="May G.S."/>
            <person name="Miller B.L."/>
            <person name="Mohamoud Y."/>
            <person name="Molina M."/>
            <person name="Monod M."/>
            <person name="Mouyna I."/>
            <person name="Mulligan S."/>
            <person name="Murphy L.D."/>
            <person name="O'Neil S."/>
            <person name="Paulsen I."/>
            <person name="Penalva M.A."/>
            <person name="Pertea M."/>
            <person name="Price C."/>
            <person name="Pritchard B.L."/>
            <person name="Quail M.A."/>
            <person name="Rabbinowitsch E."/>
            <person name="Rawlins N."/>
            <person name="Rajandream M.A."/>
            <person name="Reichard U."/>
            <person name="Renauld H."/>
            <person name="Robson G.D."/>
            <person name="Rodriguez de Cordoba S."/>
            <person name="Rodriguez-Pena J.M."/>
            <person name="Ronning C.M."/>
            <person name="Rutter S."/>
            <person name="Salzberg S.L."/>
            <person name="Sanchez M."/>
            <person name="Sanchez-Ferrero J.C."/>
            <person name="Saunders D."/>
            <person name="Seeger K."/>
            <person name="Squares R."/>
            <person name="Squares S."/>
            <person name="Takeuchi M."/>
            <person name="Tekaia F."/>
            <person name="Turner G."/>
            <person name="Vazquez de Aldana C.R."/>
            <person name="Weidman J."/>
            <person name="White O."/>
            <person name="Woodward J.R."/>
            <person name="Yu J.-H."/>
            <person name="Fraser C.M."/>
            <person name="Galagan J.E."/>
            <person name="Asai K."/>
            <person name="Machida M."/>
            <person name="Hall N."/>
            <person name="Barrell B.G."/>
            <person name="Denning D.W."/>
        </authorList>
    </citation>
    <scope>NUCLEOTIDE SEQUENCE [LARGE SCALE GENOMIC DNA]</scope>
    <source>
        <strain>ATCC MYA-4609 / CBS 101355 / FGSC A1100 / Af293</strain>
    </source>
</reference>
<dbReference type="EMBL" id="AF401202">
    <property type="protein sequence ID" value="AAL09588.1"/>
    <property type="molecule type" value="Genomic_DNA"/>
</dbReference>
<dbReference type="EMBL" id="AJ277652">
    <property type="protein sequence ID" value="CAC81899.1"/>
    <property type="molecule type" value="Genomic_DNA"/>
</dbReference>
<dbReference type="EMBL" id="AAHF01000002">
    <property type="protein sequence ID" value="EAL92581.1"/>
    <property type="molecule type" value="Genomic_DNA"/>
</dbReference>
<dbReference type="RefSeq" id="XP_754619.1">
    <property type="nucleotide sequence ID" value="XM_749526.1"/>
</dbReference>
<dbReference type="SMR" id="Q96UX3"/>
<dbReference type="FunCoup" id="Q96UX3">
    <property type="interactions" value="423"/>
</dbReference>
<dbReference type="STRING" id="330879.Q96UX3"/>
<dbReference type="EnsemblFungi" id="EAL92581">
    <property type="protein sequence ID" value="EAL92581"/>
    <property type="gene ID" value="AFUA_3G10000"/>
</dbReference>
<dbReference type="GeneID" id="3512323"/>
<dbReference type="KEGG" id="afm:AFUA_3G10000"/>
<dbReference type="VEuPathDB" id="FungiDB:Afu3g10000"/>
<dbReference type="eggNOG" id="KOG1113">
    <property type="taxonomic scope" value="Eukaryota"/>
</dbReference>
<dbReference type="HOGENOM" id="CLU_018310_0_0_1"/>
<dbReference type="InParanoid" id="Q96UX3"/>
<dbReference type="OMA" id="WSPPHHP"/>
<dbReference type="OrthoDB" id="417078at2759"/>
<dbReference type="Proteomes" id="UP000002530">
    <property type="component" value="Chromosome 3"/>
</dbReference>
<dbReference type="GO" id="GO:0005952">
    <property type="term" value="C:cAMP-dependent protein kinase complex"/>
    <property type="evidence" value="ECO:0000318"/>
    <property type="project" value="GO_Central"/>
</dbReference>
<dbReference type="GO" id="GO:0005829">
    <property type="term" value="C:cytosol"/>
    <property type="evidence" value="ECO:0000318"/>
    <property type="project" value="GO_Central"/>
</dbReference>
<dbReference type="GO" id="GO:0005634">
    <property type="term" value="C:nucleus"/>
    <property type="evidence" value="ECO:0000318"/>
    <property type="project" value="GO_Central"/>
</dbReference>
<dbReference type="GO" id="GO:0030552">
    <property type="term" value="F:cAMP binding"/>
    <property type="evidence" value="ECO:0000318"/>
    <property type="project" value="GO_Central"/>
</dbReference>
<dbReference type="GO" id="GO:0004862">
    <property type="term" value="F:cAMP-dependent protein kinase inhibitor activity"/>
    <property type="evidence" value="ECO:0000318"/>
    <property type="project" value="GO_Central"/>
</dbReference>
<dbReference type="GO" id="GO:0034236">
    <property type="term" value="F:protein kinase A catalytic subunit binding"/>
    <property type="evidence" value="ECO:0000318"/>
    <property type="project" value="GO_Central"/>
</dbReference>
<dbReference type="GO" id="GO:0007189">
    <property type="term" value="P:adenylate cyclase-activating G protein-coupled receptor signaling pathway"/>
    <property type="evidence" value="ECO:0000318"/>
    <property type="project" value="GO_Central"/>
</dbReference>
<dbReference type="GO" id="GO:0043936">
    <property type="term" value="P:asexual sporulation resulting in formation of a cellular spore"/>
    <property type="evidence" value="ECO:0000315"/>
    <property type="project" value="AspGD"/>
</dbReference>
<dbReference type="GO" id="GO:0034599">
    <property type="term" value="P:cellular response to oxidative stress"/>
    <property type="evidence" value="ECO:0000315"/>
    <property type="project" value="AspGD"/>
</dbReference>
<dbReference type="GO" id="GO:0030448">
    <property type="term" value="P:hyphal growth"/>
    <property type="evidence" value="ECO:0000315"/>
    <property type="project" value="AspGD"/>
</dbReference>
<dbReference type="GO" id="GO:0051784">
    <property type="term" value="P:negative regulation of nuclear division"/>
    <property type="evidence" value="ECO:0000315"/>
    <property type="project" value="AspGD"/>
</dbReference>
<dbReference type="GO" id="GO:0043945">
    <property type="term" value="P:positive regulation of asexual sporulation resulting in formation of a cellular spore"/>
    <property type="evidence" value="ECO:0000315"/>
    <property type="project" value="AspGD"/>
</dbReference>
<dbReference type="CDD" id="cd00038">
    <property type="entry name" value="CAP_ED"/>
    <property type="match status" value="2"/>
</dbReference>
<dbReference type="FunFam" id="2.60.120.10:FF:000039">
    <property type="entry name" value="cAMP-dependent protein kinase regulatory subunit"/>
    <property type="match status" value="1"/>
</dbReference>
<dbReference type="FunFam" id="2.60.120.10:FF:000006">
    <property type="entry name" value="cAMP-dependent protein kinase type I-alpha regulatory subunit"/>
    <property type="match status" value="1"/>
</dbReference>
<dbReference type="Gene3D" id="2.60.120.10">
    <property type="entry name" value="Jelly Rolls"/>
    <property type="match status" value="2"/>
</dbReference>
<dbReference type="InterPro" id="IPR050503">
    <property type="entry name" value="cAMP-dep_PK_reg_su-like"/>
</dbReference>
<dbReference type="InterPro" id="IPR012198">
    <property type="entry name" value="cAMP_dep_PK_reg_su"/>
</dbReference>
<dbReference type="InterPro" id="IPR018488">
    <property type="entry name" value="cNMP-bd_CS"/>
</dbReference>
<dbReference type="InterPro" id="IPR000595">
    <property type="entry name" value="cNMP-bd_dom"/>
</dbReference>
<dbReference type="InterPro" id="IPR018490">
    <property type="entry name" value="cNMP-bd_dom_sf"/>
</dbReference>
<dbReference type="InterPro" id="IPR014710">
    <property type="entry name" value="RmlC-like_jellyroll"/>
</dbReference>
<dbReference type="PANTHER" id="PTHR11635">
    <property type="entry name" value="CAMP-DEPENDENT PROTEIN KINASE REGULATORY CHAIN"/>
    <property type="match status" value="1"/>
</dbReference>
<dbReference type="PANTHER" id="PTHR11635:SF152">
    <property type="entry name" value="CAMP-DEPENDENT PROTEIN KINASE TYPE I REGULATORY SUBUNIT-RELATED"/>
    <property type="match status" value="1"/>
</dbReference>
<dbReference type="Pfam" id="PF00027">
    <property type="entry name" value="cNMP_binding"/>
    <property type="match status" value="2"/>
</dbReference>
<dbReference type="PIRSF" id="PIRSF000548">
    <property type="entry name" value="PK_regulatory"/>
    <property type="match status" value="1"/>
</dbReference>
<dbReference type="PRINTS" id="PR00103">
    <property type="entry name" value="CAMPKINASE"/>
</dbReference>
<dbReference type="SMART" id="SM00100">
    <property type="entry name" value="cNMP"/>
    <property type="match status" value="2"/>
</dbReference>
<dbReference type="SUPFAM" id="SSF51206">
    <property type="entry name" value="cAMP-binding domain-like"/>
    <property type="match status" value="2"/>
</dbReference>
<dbReference type="PROSITE" id="PS00888">
    <property type="entry name" value="CNMP_BINDING_1"/>
    <property type="match status" value="2"/>
</dbReference>
<dbReference type="PROSITE" id="PS00889">
    <property type="entry name" value="CNMP_BINDING_2"/>
    <property type="match status" value="2"/>
</dbReference>
<dbReference type="PROSITE" id="PS50042">
    <property type="entry name" value="CNMP_BINDING_3"/>
    <property type="match status" value="2"/>
</dbReference>
<accession>Q96UX3</accession>
<accession>Q4WXM2</accession>
<comment type="subunit">
    <text evidence="1">Tetramer, composed of 2 regulatory (R) and 2 catalytic (C) subunits. In the presence of cAMP it dissociates into 2 active monomeric C subunits and an R dimer (By similarity).</text>
</comment>
<comment type="similarity">
    <text evidence="4">Belongs to the cAMP-dependent kinase regulatory chain family.</text>
</comment>
<keyword id="KW-0114">cAMP</keyword>
<keyword id="KW-0116">cAMP-binding</keyword>
<keyword id="KW-0547">Nucleotide-binding</keyword>
<keyword id="KW-0597">Phosphoprotein</keyword>
<keyword id="KW-1185">Reference proteome</keyword>
<keyword id="KW-0677">Repeat</keyword>
<proteinExistence type="inferred from homology"/>
<feature type="chain" id="PRO_0000205400" description="cAMP-dependent protein kinase regulatory subunit">
    <location>
        <begin position="1"/>
        <end position="413"/>
    </location>
</feature>
<feature type="region of interest" description="Disordered" evidence="3">
    <location>
        <begin position="1"/>
        <end position="145"/>
    </location>
</feature>
<feature type="region of interest" description="Dimerization and phosphorylation" evidence="2">
    <location>
        <begin position="24"/>
        <end position="161"/>
    </location>
</feature>
<feature type="compositionally biased region" description="Low complexity" evidence="3">
    <location>
        <begin position="58"/>
        <end position="67"/>
    </location>
</feature>
<feature type="compositionally biased region" description="Polar residues" evidence="3">
    <location>
        <begin position="121"/>
        <end position="138"/>
    </location>
</feature>
<feature type="binding site">
    <location>
        <begin position="162"/>
        <end position="291"/>
    </location>
    <ligand>
        <name>3',5'-cyclic AMP</name>
        <dbReference type="ChEBI" id="CHEBI:58165"/>
        <label>1</label>
    </ligand>
</feature>
<feature type="binding site" evidence="1">
    <location>
        <position position="240"/>
    </location>
    <ligand>
        <name>3',5'-cyclic AMP</name>
        <dbReference type="ChEBI" id="CHEBI:58165"/>
        <label>1</label>
    </ligand>
</feature>
<feature type="binding site" evidence="1">
    <location>
        <position position="249"/>
    </location>
    <ligand>
        <name>3',5'-cyclic AMP</name>
        <dbReference type="ChEBI" id="CHEBI:58165"/>
        <label>1</label>
    </ligand>
</feature>
<feature type="binding site">
    <location>
        <begin position="294"/>
        <end position="413"/>
    </location>
    <ligand>
        <name>3',5'-cyclic AMP</name>
        <dbReference type="ChEBI" id="CHEBI:58165"/>
        <label>2</label>
    </ligand>
</feature>
<feature type="binding site" evidence="1">
    <location>
        <position position="361"/>
    </location>
    <ligand>
        <name>3',5'-cyclic AMP</name>
        <dbReference type="ChEBI" id="CHEBI:58165"/>
        <label>2</label>
    </ligand>
</feature>
<feature type="binding site" evidence="1">
    <location>
        <position position="370"/>
    </location>
    <ligand>
        <name>3',5'-cyclic AMP</name>
        <dbReference type="ChEBI" id="CHEBI:58165"/>
        <label>2</label>
    </ligand>
</feature>
<feature type="modified residue" description="Phosphoserine" evidence="1">
    <location>
        <position position="122"/>
    </location>
</feature>
<organism>
    <name type="scientific">Aspergillus fumigatus (strain ATCC MYA-4609 / CBS 101355 / FGSC A1100 / Af293)</name>
    <name type="common">Neosartorya fumigata</name>
    <dbReference type="NCBI Taxonomy" id="330879"/>
    <lineage>
        <taxon>Eukaryota</taxon>
        <taxon>Fungi</taxon>
        <taxon>Dikarya</taxon>
        <taxon>Ascomycota</taxon>
        <taxon>Pezizomycotina</taxon>
        <taxon>Eurotiomycetes</taxon>
        <taxon>Eurotiomycetidae</taxon>
        <taxon>Eurotiales</taxon>
        <taxon>Aspergillaceae</taxon>
        <taxon>Aspergillus</taxon>
        <taxon>Aspergillus subgen. Fumigati</taxon>
    </lineage>
</organism>
<sequence>MADSSSFPGTNPFLKVSTKDDKYSPIQKISEEEEYEVTSPTDPTFRSAHSGATAPTAGNSFNGDNGSNEGGEGIQFNRPFDAGFGQGSEGQGEHVEPPGGARPTAAANQGFPNNYALGRRTSVSAESLNPTSAGSDSWTPPCHPKTEEQLSRLKTAVSNNFLFSHLDDDQFRTVLDALVEKPIPAKDIKVISQGDAGDYFYIVENGHFDVYINPAGSVQPGPDGIGNKVSTIGPGGSFGELALMYNAPRAATIVSADPKSTLWALDRITFRRILMDSAFQRRRMYEAFLEEVPLLSSLKPYERAKIADALDAIKYPAGSTIIEEGAPGDAFYLLESGEAEAFKKDVEGPVKSYRRGDFFGELALLDDKPRAASVVAKTDVKVARLGRDGFKRLLGPVEDIMRRAEYSAKPSPS</sequence>